<name>RNP3_METBU</name>
<accession>Q12ZC2</accession>
<gene>
    <name evidence="1" type="primary">rnp3</name>
    <name type="ordered locus">Mbur_0194</name>
</gene>
<organism>
    <name type="scientific">Methanococcoides burtonii (strain DSM 6242 / NBRC 107633 / OCM 468 / ACE-M)</name>
    <dbReference type="NCBI Taxonomy" id="259564"/>
    <lineage>
        <taxon>Archaea</taxon>
        <taxon>Methanobacteriati</taxon>
        <taxon>Methanobacteriota</taxon>
        <taxon>Stenosarchaea group</taxon>
        <taxon>Methanomicrobia</taxon>
        <taxon>Methanosarcinales</taxon>
        <taxon>Methanosarcinaceae</taxon>
        <taxon>Methanococcoides</taxon>
    </lineage>
</organism>
<comment type="function">
    <text evidence="1">Part of ribonuclease P, a protein complex that generates mature tRNA molecules by cleaving their 5'-ends.</text>
</comment>
<comment type="catalytic activity">
    <reaction evidence="1">
        <text>Endonucleolytic cleavage of RNA, removing 5'-extranucleotides from tRNA precursor.</text>
        <dbReference type="EC" id="3.1.26.5"/>
    </reaction>
</comment>
<comment type="subunit">
    <text evidence="1">Consists of a catalytic RNA component and at least 4-5 protein subunits.</text>
</comment>
<comment type="subcellular location">
    <subcellularLocation>
        <location evidence="1">Cytoplasm</location>
    </subcellularLocation>
</comment>
<comment type="similarity">
    <text evidence="1">Belongs to the eukaryotic/archaeal RNase P protein component 3 family.</text>
</comment>
<keyword id="KW-0963">Cytoplasm</keyword>
<keyword id="KW-0255">Endonuclease</keyword>
<keyword id="KW-0378">Hydrolase</keyword>
<keyword id="KW-0540">Nuclease</keyword>
<keyword id="KW-0819">tRNA processing</keyword>
<evidence type="ECO:0000255" key="1">
    <source>
        <dbReference type="HAMAP-Rule" id="MF_00756"/>
    </source>
</evidence>
<reference key="1">
    <citation type="journal article" date="2009" name="ISME J.">
        <title>The genome sequence of the psychrophilic archaeon, Methanococcoides burtonii: the role of genome evolution in cold adaptation.</title>
        <authorList>
            <person name="Allen M.A."/>
            <person name="Lauro F.M."/>
            <person name="Williams T.J."/>
            <person name="Burg D."/>
            <person name="Siddiqui K.S."/>
            <person name="De Francisci D."/>
            <person name="Chong K.W."/>
            <person name="Pilak O."/>
            <person name="Chew H.H."/>
            <person name="De Maere M.Z."/>
            <person name="Ting L."/>
            <person name="Katrib M."/>
            <person name="Ng C."/>
            <person name="Sowers K.R."/>
            <person name="Galperin M.Y."/>
            <person name="Anderson I.J."/>
            <person name="Ivanova N."/>
            <person name="Dalin E."/>
            <person name="Martinez M."/>
            <person name="Lapidus A."/>
            <person name="Hauser L."/>
            <person name="Land M."/>
            <person name="Thomas T."/>
            <person name="Cavicchioli R."/>
        </authorList>
    </citation>
    <scope>NUCLEOTIDE SEQUENCE [LARGE SCALE GENOMIC DNA]</scope>
    <source>
        <strain>DSM 6242 / NBRC 107633 / OCM 468 / ACE-M</strain>
    </source>
</reference>
<proteinExistence type="inferred from homology"/>
<dbReference type="EC" id="3.1.26.5" evidence="1"/>
<dbReference type="EMBL" id="CP000300">
    <property type="protein sequence ID" value="ABE51204.1"/>
    <property type="molecule type" value="Genomic_DNA"/>
</dbReference>
<dbReference type="RefSeq" id="WP_011498366.1">
    <property type="nucleotide sequence ID" value="NC_007955.1"/>
</dbReference>
<dbReference type="SMR" id="Q12ZC2"/>
<dbReference type="STRING" id="259564.Mbur_0194"/>
<dbReference type="GeneID" id="3997161"/>
<dbReference type="KEGG" id="mbu:Mbur_0194"/>
<dbReference type="HOGENOM" id="CLU_074509_1_0_2"/>
<dbReference type="OrthoDB" id="85765at2157"/>
<dbReference type="Proteomes" id="UP000001979">
    <property type="component" value="Chromosome"/>
</dbReference>
<dbReference type="GO" id="GO:0005737">
    <property type="term" value="C:cytoplasm"/>
    <property type="evidence" value="ECO:0007669"/>
    <property type="project" value="UniProtKB-SubCell"/>
</dbReference>
<dbReference type="GO" id="GO:0030677">
    <property type="term" value="C:ribonuclease P complex"/>
    <property type="evidence" value="ECO:0007669"/>
    <property type="project" value="UniProtKB-UniRule"/>
</dbReference>
<dbReference type="GO" id="GO:0004526">
    <property type="term" value="F:ribonuclease P activity"/>
    <property type="evidence" value="ECO:0007669"/>
    <property type="project" value="UniProtKB-UniRule"/>
</dbReference>
<dbReference type="GO" id="GO:0003723">
    <property type="term" value="F:RNA binding"/>
    <property type="evidence" value="ECO:0007669"/>
    <property type="project" value="TreeGrafter"/>
</dbReference>
<dbReference type="GO" id="GO:0001682">
    <property type="term" value="P:tRNA 5'-leader removal"/>
    <property type="evidence" value="ECO:0007669"/>
    <property type="project" value="UniProtKB-UniRule"/>
</dbReference>
<dbReference type="Gene3D" id="3.20.20.140">
    <property type="entry name" value="Metal-dependent hydrolases"/>
    <property type="match status" value="1"/>
</dbReference>
<dbReference type="HAMAP" id="MF_00756">
    <property type="entry name" value="RNase_P_3"/>
    <property type="match status" value="1"/>
</dbReference>
<dbReference type="InterPro" id="IPR016195">
    <property type="entry name" value="Pol/histidinol_Pase-like"/>
</dbReference>
<dbReference type="InterPro" id="IPR023539">
    <property type="entry name" value="RNase_P_comp-3_arc"/>
</dbReference>
<dbReference type="InterPro" id="IPR002738">
    <property type="entry name" value="RNase_P_p30"/>
</dbReference>
<dbReference type="NCBIfam" id="NF046111">
    <property type="entry name" value="RNaseP3Mthb"/>
    <property type="match status" value="1"/>
</dbReference>
<dbReference type="PANTHER" id="PTHR13031:SF0">
    <property type="entry name" value="RIBONUCLEASE P PROTEIN SUBUNIT P30"/>
    <property type="match status" value="1"/>
</dbReference>
<dbReference type="PANTHER" id="PTHR13031">
    <property type="entry name" value="RIBONUCLEASE P SUBUNIT P30"/>
    <property type="match status" value="1"/>
</dbReference>
<dbReference type="Pfam" id="PF01876">
    <property type="entry name" value="RNase_P_p30"/>
    <property type="match status" value="1"/>
</dbReference>
<dbReference type="SUPFAM" id="SSF89550">
    <property type="entry name" value="PHP domain-like"/>
    <property type="match status" value="1"/>
</dbReference>
<sequence length="241" mass="26256">MAERSFYDLSIHYVPDGKNTAEELISMAKHLGFAGIGLSNHSTAEGPLKSDGTEGFDIFRTVELVASNPSKLHGLVGKYRNKVDVLAVHGGDEGINRAAVENSNVDILIHPFTPKGSGLNHVLAKSASENNVAIAFDIDSLIMSRGGRRVHSLSHFRDYLALSRKYDVPMLLTSNALSIFGLRAPREIIALAALFGMEKDEAIMALSETPLKIVQKKRHDKNYVCEGVEIFEPSPSVLGDE</sequence>
<protein>
    <recommendedName>
        <fullName evidence="1">Ribonuclease P protein component 3</fullName>
        <shortName evidence="1">RNase P component 3</shortName>
        <ecNumber evidence="1">3.1.26.5</ecNumber>
    </recommendedName>
    <alternativeName>
        <fullName evidence="1">Rpp30</fullName>
    </alternativeName>
</protein>
<feature type="chain" id="PRO_1000046626" description="Ribonuclease P protein component 3">
    <location>
        <begin position="1"/>
        <end position="241"/>
    </location>
</feature>